<dbReference type="EC" id="6.3.2.8" evidence="1"/>
<dbReference type="EMBL" id="CP000075">
    <property type="protein sequence ID" value="AAY39131.1"/>
    <property type="molecule type" value="Genomic_DNA"/>
</dbReference>
<dbReference type="RefSeq" id="WP_011268845.1">
    <property type="nucleotide sequence ID" value="NC_007005.1"/>
</dbReference>
<dbReference type="RefSeq" id="YP_237169.1">
    <property type="nucleotide sequence ID" value="NC_007005.1"/>
</dbReference>
<dbReference type="SMR" id="Q4ZNZ1"/>
<dbReference type="STRING" id="205918.Psyr_4101"/>
<dbReference type="KEGG" id="psb:Psyr_4101"/>
<dbReference type="PATRIC" id="fig|205918.7.peg.4219"/>
<dbReference type="eggNOG" id="COG0773">
    <property type="taxonomic scope" value="Bacteria"/>
</dbReference>
<dbReference type="HOGENOM" id="CLU_028104_2_2_6"/>
<dbReference type="OrthoDB" id="9804126at2"/>
<dbReference type="UniPathway" id="UPA00219"/>
<dbReference type="Proteomes" id="UP000000426">
    <property type="component" value="Chromosome"/>
</dbReference>
<dbReference type="GO" id="GO:0005737">
    <property type="term" value="C:cytoplasm"/>
    <property type="evidence" value="ECO:0007669"/>
    <property type="project" value="UniProtKB-SubCell"/>
</dbReference>
<dbReference type="GO" id="GO:0005524">
    <property type="term" value="F:ATP binding"/>
    <property type="evidence" value="ECO:0007669"/>
    <property type="project" value="UniProtKB-UniRule"/>
</dbReference>
<dbReference type="GO" id="GO:0008763">
    <property type="term" value="F:UDP-N-acetylmuramate-L-alanine ligase activity"/>
    <property type="evidence" value="ECO:0007669"/>
    <property type="project" value="UniProtKB-UniRule"/>
</dbReference>
<dbReference type="GO" id="GO:0051301">
    <property type="term" value="P:cell division"/>
    <property type="evidence" value="ECO:0007669"/>
    <property type="project" value="UniProtKB-KW"/>
</dbReference>
<dbReference type="GO" id="GO:0071555">
    <property type="term" value="P:cell wall organization"/>
    <property type="evidence" value="ECO:0007669"/>
    <property type="project" value="UniProtKB-KW"/>
</dbReference>
<dbReference type="GO" id="GO:0009252">
    <property type="term" value="P:peptidoglycan biosynthetic process"/>
    <property type="evidence" value="ECO:0007669"/>
    <property type="project" value="UniProtKB-UniRule"/>
</dbReference>
<dbReference type="GO" id="GO:0008360">
    <property type="term" value="P:regulation of cell shape"/>
    <property type="evidence" value="ECO:0007669"/>
    <property type="project" value="UniProtKB-KW"/>
</dbReference>
<dbReference type="FunFam" id="3.40.1190.10:FF:000001">
    <property type="entry name" value="UDP-N-acetylmuramate--L-alanine ligase"/>
    <property type="match status" value="1"/>
</dbReference>
<dbReference type="Gene3D" id="3.90.190.20">
    <property type="entry name" value="Mur ligase, C-terminal domain"/>
    <property type="match status" value="1"/>
</dbReference>
<dbReference type="Gene3D" id="3.40.1190.10">
    <property type="entry name" value="Mur-like, catalytic domain"/>
    <property type="match status" value="1"/>
</dbReference>
<dbReference type="Gene3D" id="3.40.50.720">
    <property type="entry name" value="NAD(P)-binding Rossmann-like Domain"/>
    <property type="match status" value="1"/>
</dbReference>
<dbReference type="HAMAP" id="MF_00046">
    <property type="entry name" value="MurC"/>
    <property type="match status" value="1"/>
</dbReference>
<dbReference type="InterPro" id="IPR036565">
    <property type="entry name" value="Mur-like_cat_sf"/>
</dbReference>
<dbReference type="InterPro" id="IPR004101">
    <property type="entry name" value="Mur_ligase_C"/>
</dbReference>
<dbReference type="InterPro" id="IPR036615">
    <property type="entry name" value="Mur_ligase_C_dom_sf"/>
</dbReference>
<dbReference type="InterPro" id="IPR013221">
    <property type="entry name" value="Mur_ligase_cen"/>
</dbReference>
<dbReference type="InterPro" id="IPR000713">
    <property type="entry name" value="Mur_ligase_N"/>
</dbReference>
<dbReference type="InterPro" id="IPR050061">
    <property type="entry name" value="MurCDEF_pg_biosynth"/>
</dbReference>
<dbReference type="InterPro" id="IPR005758">
    <property type="entry name" value="UDP-N-AcMur_Ala_ligase_MurC"/>
</dbReference>
<dbReference type="NCBIfam" id="TIGR01082">
    <property type="entry name" value="murC"/>
    <property type="match status" value="1"/>
</dbReference>
<dbReference type="PANTHER" id="PTHR43445:SF3">
    <property type="entry name" value="UDP-N-ACETYLMURAMATE--L-ALANINE LIGASE"/>
    <property type="match status" value="1"/>
</dbReference>
<dbReference type="PANTHER" id="PTHR43445">
    <property type="entry name" value="UDP-N-ACETYLMURAMATE--L-ALANINE LIGASE-RELATED"/>
    <property type="match status" value="1"/>
</dbReference>
<dbReference type="Pfam" id="PF01225">
    <property type="entry name" value="Mur_ligase"/>
    <property type="match status" value="1"/>
</dbReference>
<dbReference type="Pfam" id="PF02875">
    <property type="entry name" value="Mur_ligase_C"/>
    <property type="match status" value="1"/>
</dbReference>
<dbReference type="Pfam" id="PF08245">
    <property type="entry name" value="Mur_ligase_M"/>
    <property type="match status" value="1"/>
</dbReference>
<dbReference type="SUPFAM" id="SSF51984">
    <property type="entry name" value="MurCD N-terminal domain"/>
    <property type="match status" value="1"/>
</dbReference>
<dbReference type="SUPFAM" id="SSF53623">
    <property type="entry name" value="MurD-like peptide ligases, catalytic domain"/>
    <property type="match status" value="1"/>
</dbReference>
<dbReference type="SUPFAM" id="SSF53244">
    <property type="entry name" value="MurD-like peptide ligases, peptide-binding domain"/>
    <property type="match status" value="1"/>
</dbReference>
<organism>
    <name type="scientific">Pseudomonas syringae pv. syringae (strain B728a)</name>
    <dbReference type="NCBI Taxonomy" id="205918"/>
    <lineage>
        <taxon>Bacteria</taxon>
        <taxon>Pseudomonadati</taxon>
        <taxon>Pseudomonadota</taxon>
        <taxon>Gammaproteobacteria</taxon>
        <taxon>Pseudomonadales</taxon>
        <taxon>Pseudomonadaceae</taxon>
        <taxon>Pseudomonas</taxon>
        <taxon>Pseudomonas syringae</taxon>
    </lineage>
</organism>
<reference key="1">
    <citation type="journal article" date="2005" name="Proc. Natl. Acad. Sci. U.S.A.">
        <title>Comparison of the complete genome sequences of Pseudomonas syringae pv. syringae B728a and pv. tomato DC3000.</title>
        <authorList>
            <person name="Feil H."/>
            <person name="Feil W.S."/>
            <person name="Chain P."/>
            <person name="Larimer F."/>
            <person name="Dibartolo G."/>
            <person name="Copeland A."/>
            <person name="Lykidis A."/>
            <person name="Trong S."/>
            <person name="Nolan M."/>
            <person name="Goltsman E."/>
            <person name="Thiel J."/>
            <person name="Malfatti S."/>
            <person name="Loper J.E."/>
            <person name="Lapidus A."/>
            <person name="Detter J.C."/>
            <person name="Land M."/>
            <person name="Richardson P.M."/>
            <person name="Kyrpides N.C."/>
            <person name="Ivanova N."/>
            <person name="Lindow S.E."/>
        </authorList>
    </citation>
    <scope>NUCLEOTIDE SEQUENCE [LARGE SCALE GENOMIC DNA]</scope>
    <source>
        <strain>B728a</strain>
    </source>
</reference>
<gene>
    <name evidence="1" type="primary">murC</name>
    <name type="ordered locus">Psyr_4101</name>
</gene>
<protein>
    <recommendedName>
        <fullName evidence="1">UDP-N-acetylmuramate--L-alanine ligase</fullName>
        <ecNumber evidence="1">6.3.2.8</ecNumber>
    </recommendedName>
    <alternativeName>
        <fullName evidence="1">UDP-N-acetylmuramoyl-L-alanine synthetase</fullName>
    </alternativeName>
</protein>
<feature type="chain" id="PRO_0000242579" description="UDP-N-acetylmuramate--L-alanine ligase">
    <location>
        <begin position="1"/>
        <end position="486"/>
    </location>
</feature>
<feature type="binding site" evidence="1">
    <location>
        <begin position="123"/>
        <end position="129"/>
    </location>
    <ligand>
        <name>ATP</name>
        <dbReference type="ChEBI" id="CHEBI:30616"/>
    </ligand>
</feature>
<name>MURC_PSEU2</name>
<accession>Q4ZNZ1</accession>
<comment type="function">
    <text evidence="1">Cell wall formation.</text>
</comment>
<comment type="catalytic activity">
    <reaction evidence="1">
        <text>UDP-N-acetyl-alpha-D-muramate + L-alanine + ATP = UDP-N-acetyl-alpha-D-muramoyl-L-alanine + ADP + phosphate + H(+)</text>
        <dbReference type="Rhea" id="RHEA:23372"/>
        <dbReference type="ChEBI" id="CHEBI:15378"/>
        <dbReference type="ChEBI" id="CHEBI:30616"/>
        <dbReference type="ChEBI" id="CHEBI:43474"/>
        <dbReference type="ChEBI" id="CHEBI:57972"/>
        <dbReference type="ChEBI" id="CHEBI:70757"/>
        <dbReference type="ChEBI" id="CHEBI:83898"/>
        <dbReference type="ChEBI" id="CHEBI:456216"/>
        <dbReference type="EC" id="6.3.2.8"/>
    </reaction>
</comment>
<comment type="pathway">
    <text evidence="1">Cell wall biogenesis; peptidoglycan biosynthesis.</text>
</comment>
<comment type="subcellular location">
    <subcellularLocation>
        <location evidence="1">Cytoplasm</location>
    </subcellularLocation>
</comment>
<comment type="similarity">
    <text evidence="1">Belongs to the MurCDEF family.</text>
</comment>
<keyword id="KW-0067">ATP-binding</keyword>
<keyword id="KW-0131">Cell cycle</keyword>
<keyword id="KW-0132">Cell division</keyword>
<keyword id="KW-0133">Cell shape</keyword>
<keyword id="KW-0961">Cell wall biogenesis/degradation</keyword>
<keyword id="KW-0963">Cytoplasm</keyword>
<keyword id="KW-0436">Ligase</keyword>
<keyword id="KW-0547">Nucleotide-binding</keyword>
<keyword id="KW-0573">Peptidoglycan synthesis</keyword>
<evidence type="ECO:0000255" key="1">
    <source>
        <dbReference type="HAMAP-Rule" id="MF_00046"/>
    </source>
</evidence>
<proteinExistence type="inferred from homology"/>
<sequence length="486" mass="52625">MVENQRAMPQPEMRRIRRIHFVGIGGVGMCGIAEVLLNLGYEVSGSDLKGSAVTERLESFGAQIFIGHRAENTIGADVLVVSSAVNTSNPEVATALERRIPVVPRAEMLAELMRYRHGIAVAGTHGKTTTTSLIASVFAAGGLDPTFVIGGRLNAAGTNAQLGTSRYLIAEADESDASFLHLQPLVAVVTNIDADHMATYEGDFNKLKKTFVEFLHNLPFYGLAVMCIDDPVVREILPLVKRPTLTYGFSESADIRAINVRQDGMLTFFTVLRRDREPLDVSVNMPGNHNVLNSLATIAIATDEGVSDEAIVQGLSGFQGVGRRFQVYGELPVDGGHVMLVDDYGHHPREVAAVINAVRGGWPDRRLVMVYQPHRFSRTRDLYDDFVQVLADANVLLLMEVYPAGEEPIPGADSRNLCHSIRQSGQLDPIYIERGVELAPLVKPLLRAGDILLCQGAGDIGGLAPQLLKSPLFAGAKVASTEGKLK</sequence>